<dbReference type="EC" id="2.3.1.181" evidence="1"/>
<dbReference type="EMBL" id="AE005174">
    <property type="protein sequence ID" value="AAG54964.1"/>
    <property type="status" value="ALT_INIT"/>
    <property type="molecule type" value="Genomic_DNA"/>
</dbReference>
<dbReference type="EMBL" id="BA000007">
    <property type="protein sequence ID" value="BAB34091.2"/>
    <property type="molecule type" value="Genomic_DNA"/>
</dbReference>
<dbReference type="RefSeq" id="NP_308695.2">
    <property type="nucleotide sequence ID" value="NC_002695.1"/>
</dbReference>
<dbReference type="RefSeq" id="WP_000284027.1">
    <property type="nucleotide sequence ID" value="NZ_VOAI01000012.1"/>
</dbReference>
<dbReference type="SMR" id="P60721"/>
<dbReference type="STRING" id="155864.Z0775"/>
<dbReference type="GeneID" id="917028"/>
<dbReference type="GeneID" id="93776852"/>
<dbReference type="KEGG" id="ece:Z0775"/>
<dbReference type="KEGG" id="ecs:ECs_0668"/>
<dbReference type="PATRIC" id="fig|386585.9.peg.779"/>
<dbReference type="eggNOG" id="COG0321">
    <property type="taxonomic scope" value="Bacteria"/>
</dbReference>
<dbReference type="HOGENOM" id="CLU_035168_3_1_6"/>
<dbReference type="OMA" id="GEVTYHC"/>
<dbReference type="UniPathway" id="UPA00538">
    <property type="reaction ID" value="UER00592"/>
</dbReference>
<dbReference type="Proteomes" id="UP000000558">
    <property type="component" value="Chromosome"/>
</dbReference>
<dbReference type="Proteomes" id="UP000002519">
    <property type="component" value="Chromosome"/>
</dbReference>
<dbReference type="GO" id="GO:0005737">
    <property type="term" value="C:cytoplasm"/>
    <property type="evidence" value="ECO:0007669"/>
    <property type="project" value="UniProtKB-SubCell"/>
</dbReference>
<dbReference type="GO" id="GO:0033819">
    <property type="term" value="F:lipoyl(octanoyl) transferase activity"/>
    <property type="evidence" value="ECO:0007669"/>
    <property type="project" value="UniProtKB-EC"/>
</dbReference>
<dbReference type="GO" id="GO:0036211">
    <property type="term" value="P:protein modification process"/>
    <property type="evidence" value="ECO:0007669"/>
    <property type="project" value="InterPro"/>
</dbReference>
<dbReference type="CDD" id="cd16444">
    <property type="entry name" value="LipB"/>
    <property type="match status" value="1"/>
</dbReference>
<dbReference type="FunFam" id="3.30.930.10:FF:000020">
    <property type="entry name" value="Octanoyltransferase"/>
    <property type="match status" value="1"/>
</dbReference>
<dbReference type="Gene3D" id="3.30.930.10">
    <property type="entry name" value="Bira Bifunctional Protein, Domain 2"/>
    <property type="match status" value="1"/>
</dbReference>
<dbReference type="HAMAP" id="MF_00013">
    <property type="entry name" value="LipB"/>
    <property type="match status" value="1"/>
</dbReference>
<dbReference type="InterPro" id="IPR045864">
    <property type="entry name" value="aa-tRNA-synth_II/BPL/LPL"/>
</dbReference>
<dbReference type="InterPro" id="IPR004143">
    <property type="entry name" value="BPL_LPL_catalytic"/>
</dbReference>
<dbReference type="InterPro" id="IPR000544">
    <property type="entry name" value="Octanoyltransferase"/>
</dbReference>
<dbReference type="InterPro" id="IPR020605">
    <property type="entry name" value="Octanoyltransferase_CS"/>
</dbReference>
<dbReference type="NCBIfam" id="TIGR00214">
    <property type="entry name" value="lipB"/>
    <property type="match status" value="1"/>
</dbReference>
<dbReference type="NCBIfam" id="NF010922">
    <property type="entry name" value="PRK14342.1"/>
    <property type="match status" value="1"/>
</dbReference>
<dbReference type="PANTHER" id="PTHR10993:SF7">
    <property type="entry name" value="LIPOYLTRANSFERASE 2, MITOCHONDRIAL-RELATED"/>
    <property type="match status" value="1"/>
</dbReference>
<dbReference type="PANTHER" id="PTHR10993">
    <property type="entry name" value="OCTANOYLTRANSFERASE"/>
    <property type="match status" value="1"/>
</dbReference>
<dbReference type="Pfam" id="PF21948">
    <property type="entry name" value="LplA-B_cat"/>
    <property type="match status" value="1"/>
</dbReference>
<dbReference type="PIRSF" id="PIRSF016262">
    <property type="entry name" value="LPLase"/>
    <property type="match status" value="1"/>
</dbReference>
<dbReference type="SUPFAM" id="SSF55681">
    <property type="entry name" value="Class II aaRS and biotin synthetases"/>
    <property type="match status" value="1"/>
</dbReference>
<dbReference type="PROSITE" id="PS51733">
    <property type="entry name" value="BPL_LPL_CATALYTIC"/>
    <property type="match status" value="1"/>
</dbReference>
<dbReference type="PROSITE" id="PS01313">
    <property type="entry name" value="LIPB"/>
    <property type="match status" value="1"/>
</dbReference>
<organism>
    <name type="scientific">Escherichia coli O157:H7</name>
    <dbReference type="NCBI Taxonomy" id="83334"/>
    <lineage>
        <taxon>Bacteria</taxon>
        <taxon>Pseudomonadati</taxon>
        <taxon>Pseudomonadota</taxon>
        <taxon>Gammaproteobacteria</taxon>
        <taxon>Enterobacterales</taxon>
        <taxon>Enterobacteriaceae</taxon>
        <taxon>Escherichia</taxon>
    </lineage>
</organism>
<reference key="1">
    <citation type="journal article" date="2001" name="Nature">
        <title>Genome sequence of enterohaemorrhagic Escherichia coli O157:H7.</title>
        <authorList>
            <person name="Perna N.T."/>
            <person name="Plunkett G. III"/>
            <person name="Burland V."/>
            <person name="Mau B."/>
            <person name="Glasner J.D."/>
            <person name="Rose D.J."/>
            <person name="Mayhew G.F."/>
            <person name="Evans P.S."/>
            <person name="Gregor J."/>
            <person name="Kirkpatrick H.A."/>
            <person name="Posfai G."/>
            <person name="Hackett J."/>
            <person name="Klink S."/>
            <person name="Boutin A."/>
            <person name="Shao Y."/>
            <person name="Miller L."/>
            <person name="Grotbeck E.J."/>
            <person name="Davis N.W."/>
            <person name="Lim A."/>
            <person name="Dimalanta E.T."/>
            <person name="Potamousis K."/>
            <person name="Apodaca J."/>
            <person name="Anantharaman T.S."/>
            <person name="Lin J."/>
            <person name="Yen G."/>
            <person name="Schwartz D.C."/>
            <person name="Welch R.A."/>
            <person name="Blattner F.R."/>
        </authorList>
    </citation>
    <scope>NUCLEOTIDE SEQUENCE [LARGE SCALE GENOMIC DNA]</scope>
    <source>
        <strain>O157:H7 / EDL933 / ATCC 700927 / EHEC</strain>
    </source>
</reference>
<reference key="2">
    <citation type="journal article" date="2001" name="DNA Res.">
        <title>Complete genome sequence of enterohemorrhagic Escherichia coli O157:H7 and genomic comparison with a laboratory strain K-12.</title>
        <authorList>
            <person name="Hayashi T."/>
            <person name="Makino K."/>
            <person name="Ohnishi M."/>
            <person name="Kurokawa K."/>
            <person name="Ishii K."/>
            <person name="Yokoyama K."/>
            <person name="Han C.-G."/>
            <person name="Ohtsubo E."/>
            <person name="Nakayama K."/>
            <person name="Murata T."/>
            <person name="Tanaka M."/>
            <person name="Tobe T."/>
            <person name="Iida T."/>
            <person name="Takami H."/>
            <person name="Honda T."/>
            <person name="Sasakawa C."/>
            <person name="Ogasawara N."/>
            <person name="Yasunaga T."/>
            <person name="Kuhara S."/>
            <person name="Shiba T."/>
            <person name="Hattori M."/>
            <person name="Shinagawa H."/>
        </authorList>
    </citation>
    <scope>NUCLEOTIDE SEQUENCE [LARGE SCALE GENOMIC DNA]</scope>
    <source>
        <strain>O157:H7 / Sakai / RIMD 0509952 / EHEC</strain>
    </source>
</reference>
<feature type="chain" id="PRO_0000062835" description="Octanoyltransferase">
    <location>
        <begin position="1"/>
        <end position="213"/>
    </location>
</feature>
<feature type="domain" description="BPL/LPL catalytic" evidence="2">
    <location>
        <begin position="32"/>
        <end position="207"/>
    </location>
</feature>
<feature type="active site" description="Acyl-thioester intermediate" evidence="1">
    <location>
        <position position="169"/>
    </location>
</feature>
<feature type="binding site" evidence="1">
    <location>
        <begin position="71"/>
        <end position="78"/>
    </location>
    <ligand>
        <name>substrate</name>
    </ligand>
</feature>
<feature type="binding site" evidence="1">
    <location>
        <begin position="138"/>
        <end position="140"/>
    </location>
    <ligand>
        <name>substrate</name>
    </ligand>
</feature>
<feature type="binding site" evidence="1">
    <location>
        <begin position="151"/>
        <end position="153"/>
    </location>
    <ligand>
        <name>substrate</name>
    </ligand>
</feature>
<feature type="site" description="Lowers pKa of active site Cys" evidence="1">
    <location>
        <position position="135"/>
    </location>
</feature>
<name>LIPB_ECO57</name>
<proteinExistence type="inferred from homology"/>
<sequence length="213" mass="23883">MYQDKILVRQLGLQPYEPISQAMHEFTDTRDDSTLDEIWLVEHYPVFTQGQAGKAEHILMPGDIPVIQSDRGGQVTYHGPGQQVMYVLLNLKRRKLGVRELVTLLEQTVVNTLAELGIEAHPRADAPGVYVGEKKICSLGLRIRRGCSFHGLALNVNMDLSPFLRINPCGYAGMEMAKISQWKPEATTNNIAPRLLENILALLNNPDFEYITA</sequence>
<protein>
    <recommendedName>
        <fullName evidence="1">Octanoyltransferase</fullName>
        <ecNumber evidence="1">2.3.1.181</ecNumber>
    </recommendedName>
    <alternativeName>
        <fullName evidence="1">Lipoate-protein ligase B</fullName>
    </alternativeName>
    <alternativeName>
        <fullName evidence="1">Lipoyl/octanoyl transferase</fullName>
    </alternativeName>
    <alternativeName>
        <fullName evidence="1">Octanoyl-[acyl-carrier-protein]-protein N-octanoyltransferase</fullName>
    </alternativeName>
</protein>
<gene>
    <name evidence="1" type="primary">lipB</name>
    <name type="ordered locus">Z0775</name>
    <name type="ordered locus">ECs0668</name>
</gene>
<evidence type="ECO:0000255" key="1">
    <source>
        <dbReference type="HAMAP-Rule" id="MF_00013"/>
    </source>
</evidence>
<evidence type="ECO:0000255" key="2">
    <source>
        <dbReference type="PROSITE-ProRule" id="PRU01067"/>
    </source>
</evidence>
<evidence type="ECO:0000305" key="3"/>
<comment type="function">
    <text evidence="1">Catalyzes the transfer of endogenously produced octanoic acid from octanoyl-acyl-carrier-protein onto the lipoyl domains of lipoate-dependent enzymes. Lipoyl-ACP can also act as a substrate although octanoyl-ACP is likely to be the physiological substrate.</text>
</comment>
<comment type="catalytic activity">
    <reaction evidence="1">
        <text>octanoyl-[ACP] + L-lysyl-[protein] = N(6)-octanoyl-L-lysyl-[protein] + holo-[ACP] + H(+)</text>
        <dbReference type="Rhea" id="RHEA:17665"/>
        <dbReference type="Rhea" id="RHEA-COMP:9636"/>
        <dbReference type="Rhea" id="RHEA-COMP:9685"/>
        <dbReference type="Rhea" id="RHEA-COMP:9752"/>
        <dbReference type="Rhea" id="RHEA-COMP:9928"/>
        <dbReference type="ChEBI" id="CHEBI:15378"/>
        <dbReference type="ChEBI" id="CHEBI:29969"/>
        <dbReference type="ChEBI" id="CHEBI:64479"/>
        <dbReference type="ChEBI" id="CHEBI:78463"/>
        <dbReference type="ChEBI" id="CHEBI:78809"/>
        <dbReference type="EC" id="2.3.1.181"/>
    </reaction>
</comment>
<comment type="pathway">
    <text evidence="1">Protein modification; protein lipoylation via endogenous pathway; protein N(6)-(lipoyl)lysine from octanoyl-[acyl-carrier-protein]: step 1/2.</text>
</comment>
<comment type="subcellular location">
    <subcellularLocation>
        <location evidence="1">Cytoplasm</location>
    </subcellularLocation>
</comment>
<comment type="miscellaneous">
    <text evidence="1">In the reaction, the free carboxyl group of octanoic acid is attached via an amide linkage to the epsilon-amino group of a specific lysine residue of lipoyl domains of lipoate-dependent enzymes.</text>
</comment>
<comment type="similarity">
    <text evidence="1">Belongs to the LipB family.</text>
</comment>
<comment type="sequence caution" evidence="3">
    <conflict type="erroneous initiation">
        <sequence resource="EMBL-CDS" id="AAG54964"/>
    </conflict>
    <text>Truncated N-terminus.</text>
</comment>
<keyword id="KW-0012">Acyltransferase</keyword>
<keyword id="KW-0963">Cytoplasm</keyword>
<keyword id="KW-1185">Reference proteome</keyword>
<keyword id="KW-0808">Transferase</keyword>
<accession>P60721</accession>
<accession>P30976</accession>
<accession>P77684</accession>
<accession>Q8XBQ2</accession>